<organism>
    <name type="scientific">Saccharomyces cerevisiae (strain ATCC 204508 / S288c)</name>
    <name type="common">Baker's yeast</name>
    <dbReference type="NCBI Taxonomy" id="559292"/>
    <lineage>
        <taxon>Eukaryota</taxon>
        <taxon>Fungi</taxon>
        <taxon>Dikarya</taxon>
        <taxon>Ascomycota</taxon>
        <taxon>Saccharomycotina</taxon>
        <taxon>Saccharomycetes</taxon>
        <taxon>Saccharomycetales</taxon>
        <taxon>Saccharomycetaceae</taxon>
        <taxon>Saccharomyces</taxon>
    </lineage>
</organism>
<name>CIN4_YEAST</name>
<dbReference type="EMBL" id="L36669">
    <property type="protein sequence ID" value="AAA50350.1"/>
    <property type="molecule type" value="Genomic_DNA"/>
</dbReference>
<dbReference type="EMBL" id="X77086">
    <property type="protein sequence ID" value="CAA54358.1"/>
    <property type="molecule type" value="Genomic_DNA"/>
</dbReference>
<dbReference type="EMBL" id="Z47071">
    <property type="protein sequence ID" value="CAA87352.1"/>
    <property type="molecule type" value="Genomic_DNA"/>
</dbReference>
<dbReference type="EMBL" id="AY558409">
    <property type="protein sequence ID" value="AAS56735.1"/>
    <property type="molecule type" value="Genomic_DNA"/>
</dbReference>
<dbReference type="EMBL" id="BK006946">
    <property type="protein sequence ID" value="DAA10035.1"/>
    <property type="molecule type" value="Genomic_DNA"/>
</dbReference>
<dbReference type="PIR" id="S51496">
    <property type="entry name" value="S51496"/>
</dbReference>
<dbReference type="RefSeq" id="NP_013858.1">
    <property type="nucleotide sequence ID" value="NM_001182640.1"/>
</dbReference>
<dbReference type="SMR" id="P39110"/>
<dbReference type="BioGRID" id="35315">
    <property type="interactions" value="119"/>
</dbReference>
<dbReference type="DIP" id="DIP-1256N"/>
<dbReference type="FunCoup" id="P39110">
    <property type="interactions" value="83"/>
</dbReference>
<dbReference type="IntAct" id="P39110">
    <property type="interactions" value="10"/>
</dbReference>
<dbReference type="MINT" id="P39110"/>
<dbReference type="STRING" id="4932.YMR138W"/>
<dbReference type="GlyGen" id="P39110">
    <property type="glycosylation" value="1 site"/>
</dbReference>
<dbReference type="iPTMnet" id="P39110"/>
<dbReference type="PaxDb" id="4932-YMR138W"/>
<dbReference type="PeptideAtlas" id="P39110"/>
<dbReference type="EnsemblFungi" id="YMR138W_mRNA">
    <property type="protein sequence ID" value="YMR138W"/>
    <property type="gene ID" value="YMR138W"/>
</dbReference>
<dbReference type="GeneID" id="855169"/>
<dbReference type="KEGG" id="sce:YMR138W"/>
<dbReference type="AGR" id="SGD:S000004746"/>
<dbReference type="SGD" id="S000004746">
    <property type="gene designation" value="CIN4"/>
</dbReference>
<dbReference type="VEuPathDB" id="FungiDB:YMR138W"/>
<dbReference type="eggNOG" id="KOG0073">
    <property type="taxonomic scope" value="Eukaryota"/>
</dbReference>
<dbReference type="GeneTree" id="ENSGT00940000157941"/>
<dbReference type="HOGENOM" id="CLU_040729_12_3_1"/>
<dbReference type="InParanoid" id="P39110"/>
<dbReference type="OMA" id="KTHHWQI"/>
<dbReference type="OrthoDB" id="2011769at2759"/>
<dbReference type="BioCyc" id="YEAST:G3O-32831-MONOMER"/>
<dbReference type="BioGRID-ORCS" id="855169">
    <property type="hits" value="0 hits in 10 CRISPR screens"/>
</dbReference>
<dbReference type="PRO" id="PR:P39110"/>
<dbReference type="Proteomes" id="UP000002311">
    <property type="component" value="Chromosome XIII"/>
</dbReference>
<dbReference type="RNAct" id="P39110">
    <property type="molecule type" value="protein"/>
</dbReference>
<dbReference type="GO" id="GO:0005737">
    <property type="term" value="C:cytoplasm"/>
    <property type="evidence" value="ECO:0007005"/>
    <property type="project" value="SGD"/>
</dbReference>
<dbReference type="GO" id="GO:0015630">
    <property type="term" value="C:microtubule cytoskeleton"/>
    <property type="evidence" value="ECO:0000318"/>
    <property type="project" value="GO_Central"/>
</dbReference>
<dbReference type="GO" id="GO:0005525">
    <property type="term" value="F:GTP binding"/>
    <property type="evidence" value="ECO:0000318"/>
    <property type="project" value="GO_Central"/>
</dbReference>
<dbReference type="GO" id="GO:0003924">
    <property type="term" value="F:GTPase activity"/>
    <property type="evidence" value="ECO:0007669"/>
    <property type="project" value="InterPro"/>
</dbReference>
<dbReference type="GO" id="GO:0006457">
    <property type="term" value="P:protein folding"/>
    <property type="evidence" value="ECO:0000316"/>
    <property type="project" value="SGD"/>
</dbReference>
<dbReference type="GO" id="GO:0007021">
    <property type="term" value="P:tubulin complex assembly"/>
    <property type="evidence" value="ECO:0000315"/>
    <property type="project" value="SGD"/>
</dbReference>
<dbReference type="CDD" id="cd00878">
    <property type="entry name" value="Arf_Arl"/>
    <property type="match status" value="1"/>
</dbReference>
<dbReference type="FunFam" id="3.40.50.300:FF:002461">
    <property type="entry name" value="GTP-binding protein CIN4"/>
    <property type="match status" value="1"/>
</dbReference>
<dbReference type="Gene3D" id="3.40.50.300">
    <property type="entry name" value="P-loop containing nucleotide triphosphate hydrolases"/>
    <property type="match status" value="1"/>
</dbReference>
<dbReference type="InterPro" id="IPR044612">
    <property type="entry name" value="ARL2/3"/>
</dbReference>
<dbReference type="InterPro" id="IPR027417">
    <property type="entry name" value="P-loop_NTPase"/>
</dbReference>
<dbReference type="InterPro" id="IPR005225">
    <property type="entry name" value="Small_GTP-bd"/>
</dbReference>
<dbReference type="InterPro" id="IPR006689">
    <property type="entry name" value="Small_GTPase_ARF/SAR"/>
</dbReference>
<dbReference type="NCBIfam" id="TIGR00231">
    <property type="entry name" value="small_GTP"/>
    <property type="match status" value="1"/>
</dbReference>
<dbReference type="PANTHER" id="PTHR45697">
    <property type="entry name" value="ADP-RIBOSYLATION FACTOR-LIKE PROTEIN 2-RELATED"/>
    <property type="match status" value="1"/>
</dbReference>
<dbReference type="Pfam" id="PF00025">
    <property type="entry name" value="Arf"/>
    <property type="match status" value="1"/>
</dbReference>
<dbReference type="PRINTS" id="PR00328">
    <property type="entry name" value="SAR1GTPBP"/>
</dbReference>
<dbReference type="SMART" id="SM00177">
    <property type="entry name" value="ARF"/>
    <property type="match status" value="1"/>
</dbReference>
<dbReference type="SMART" id="SM00178">
    <property type="entry name" value="SAR"/>
    <property type="match status" value="1"/>
</dbReference>
<dbReference type="SUPFAM" id="SSF52540">
    <property type="entry name" value="P-loop containing nucleoside triphosphate hydrolases"/>
    <property type="match status" value="1"/>
</dbReference>
<dbReference type="PROSITE" id="PS51417">
    <property type="entry name" value="ARF"/>
    <property type="match status" value="1"/>
</dbReference>
<comment type="function">
    <text>Implicated in yeast microtubule function.</text>
</comment>
<comment type="miscellaneous">
    <text evidence="2">Present with 468 molecules/cell in log phase SD medium.</text>
</comment>
<feature type="chain" id="PRO_0000122464" description="GTP-binding protein CIN4">
    <location>
        <begin position="1"/>
        <end position="191"/>
    </location>
</feature>
<feature type="binding site" evidence="1">
    <location>
        <begin position="23"/>
        <end position="30"/>
    </location>
    <ligand>
        <name>GTP</name>
        <dbReference type="ChEBI" id="CHEBI:37565"/>
    </ligand>
</feature>
<feature type="binding site" evidence="1">
    <location>
        <begin position="69"/>
        <end position="73"/>
    </location>
    <ligand>
        <name>GTP</name>
        <dbReference type="ChEBI" id="CHEBI:37565"/>
    </ligand>
</feature>
<feature type="binding site" evidence="1">
    <location>
        <begin position="131"/>
        <end position="134"/>
    </location>
    <ligand>
        <name>GTP</name>
        <dbReference type="ChEBI" id="CHEBI:37565"/>
    </ligand>
</feature>
<gene>
    <name type="primary">CIN4</name>
    <name type="synonym">GTP1</name>
    <name type="synonym">UGX1</name>
    <name type="ordered locus">YMR138W</name>
    <name type="ORF">YM9375.07</name>
</gene>
<protein>
    <recommendedName>
        <fullName>GTP-binding protein CIN4</fullName>
    </recommendedName>
    <alternativeName>
        <fullName>Chromosome instability protein 4</fullName>
    </alternativeName>
</protein>
<reference key="1">
    <citation type="submission" date="1994-10" db="EMBL/GenBank/DDBJ databases">
        <title>A small GTP-binding protein implicated in yeast microtubule function.</title>
        <authorList>
            <person name="Stearns T."/>
            <person name="Clark C.D."/>
            <person name="Hoyt M.A."/>
            <person name="Kahn R.A."/>
            <person name="Botstein D."/>
        </authorList>
    </citation>
    <scope>NUCLEOTIDE SEQUENCE [GENOMIC DNA]</scope>
    <source>
        <strain>ATCC 204508 / S288c</strain>
    </source>
</reference>
<reference key="2">
    <citation type="journal article" date="1994" name="Curr. Genet.">
        <title>Molecular characterisation of GTP1, a Saccharomyces cerevisiae gene encoding a small GTP-binding protein.</title>
        <authorList>
            <person name="Wolter R."/>
            <person name="Richter D."/>
            <person name="Niegemann E."/>
            <person name="Brendel M."/>
        </authorList>
    </citation>
    <scope>NUCLEOTIDE SEQUENCE [GENOMIC DNA]</scope>
</reference>
<reference key="3">
    <citation type="journal article" date="1997" name="Nature">
        <title>The nucleotide sequence of Saccharomyces cerevisiae chromosome XIII.</title>
        <authorList>
            <person name="Bowman S."/>
            <person name="Churcher C.M."/>
            <person name="Badcock K."/>
            <person name="Brown D."/>
            <person name="Chillingworth T."/>
            <person name="Connor R."/>
            <person name="Dedman K."/>
            <person name="Devlin K."/>
            <person name="Gentles S."/>
            <person name="Hamlin N."/>
            <person name="Hunt S."/>
            <person name="Jagels K."/>
            <person name="Lye G."/>
            <person name="Moule S."/>
            <person name="Odell C."/>
            <person name="Pearson D."/>
            <person name="Rajandream M.A."/>
            <person name="Rice P."/>
            <person name="Skelton J."/>
            <person name="Walsh S.V."/>
            <person name="Whitehead S."/>
            <person name="Barrell B.G."/>
        </authorList>
    </citation>
    <scope>NUCLEOTIDE SEQUENCE [LARGE SCALE GENOMIC DNA]</scope>
    <source>
        <strain>ATCC 204508 / S288c</strain>
    </source>
</reference>
<reference key="4">
    <citation type="journal article" date="2014" name="G3 (Bethesda)">
        <title>The reference genome sequence of Saccharomyces cerevisiae: Then and now.</title>
        <authorList>
            <person name="Engel S.R."/>
            <person name="Dietrich F.S."/>
            <person name="Fisk D.G."/>
            <person name="Binkley G."/>
            <person name="Balakrishnan R."/>
            <person name="Costanzo M.C."/>
            <person name="Dwight S.S."/>
            <person name="Hitz B.C."/>
            <person name="Karra K."/>
            <person name="Nash R.S."/>
            <person name="Weng S."/>
            <person name="Wong E.D."/>
            <person name="Lloyd P."/>
            <person name="Skrzypek M.S."/>
            <person name="Miyasato S.R."/>
            <person name="Simison M."/>
            <person name="Cherry J.M."/>
        </authorList>
    </citation>
    <scope>GENOME REANNOTATION</scope>
    <source>
        <strain>ATCC 204508 / S288c</strain>
    </source>
</reference>
<reference key="5">
    <citation type="journal article" date="2007" name="Genome Res.">
        <title>Approaching a complete repository of sequence-verified protein-encoding clones for Saccharomyces cerevisiae.</title>
        <authorList>
            <person name="Hu Y."/>
            <person name="Rolfs A."/>
            <person name="Bhullar B."/>
            <person name="Murthy T.V.S."/>
            <person name="Zhu C."/>
            <person name="Berger M.F."/>
            <person name="Camargo A.A."/>
            <person name="Kelley F."/>
            <person name="McCarron S."/>
            <person name="Jepson D."/>
            <person name="Richardson A."/>
            <person name="Raphael J."/>
            <person name="Moreira D."/>
            <person name="Taycher E."/>
            <person name="Zuo D."/>
            <person name="Mohr S."/>
            <person name="Kane M.F."/>
            <person name="Williamson J."/>
            <person name="Simpson A.J.G."/>
            <person name="Bulyk M.L."/>
            <person name="Harlow E."/>
            <person name="Marsischky G."/>
            <person name="Kolodner R.D."/>
            <person name="LaBaer J."/>
        </authorList>
    </citation>
    <scope>NUCLEOTIDE SEQUENCE [GENOMIC DNA]</scope>
    <source>
        <strain>ATCC 204508 / S288c</strain>
    </source>
</reference>
<reference key="6">
    <citation type="journal article" date="2003" name="Nature">
        <title>Global analysis of protein expression in yeast.</title>
        <authorList>
            <person name="Ghaemmaghami S."/>
            <person name="Huh W.-K."/>
            <person name="Bower K."/>
            <person name="Howson R.W."/>
            <person name="Belle A."/>
            <person name="Dephoure N."/>
            <person name="O'Shea E.K."/>
            <person name="Weissman J.S."/>
        </authorList>
    </citation>
    <scope>LEVEL OF PROTEIN EXPRESSION [LARGE SCALE ANALYSIS]</scope>
</reference>
<sequence length="191" mass="22067">MGLLSIIRKQKLRDKEIRCLILGLDNSGKSTIVNKLLPKDEQNNDGIMPTVGFQIHSLMIKDVTISLWDIGGQRTLRPFWDNYFDKTQAMIWCIDVSLSMRFDETLQELKELINRDENRIGYECAVIVVLNKIDLVEDKSELHRRCLLVESELKCLFKPDIRIELVKCSGVTGEGIDNLRDRLVESCHFTQ</sequence>
<evidence type="ECO:0000250" key="1"/>
<evidence type="ECO:0000269" key="2">
    <source>
    </source>
</evidence>
<proteinExistence type="evidence at protein level"/>
<accession>P39110</accession>
<accession>D6VZW1</accession>
<keyword id="KW-0342">GTP-binding</keyword>
<keyword id="KW-0547">Nucleotide-binding</keyword>
<keyword id="KW-1185">Reference proteome</keyword>